<keyword id="KW-0002">3D-structure</keyword>
<keyword id="KW-0880">Kelch repeat</keyword>
<keyword id="KW-0597">Phosphoprotein</keyword>
<keyword id="KW-1267">Proteomics identification</keyword>
<keyword id="KW-1185">Reference proteome</keyword>
<keyword id="KW-0677">Repeat</keyword>
<keyword id="KW-0732">Signal</keyword>
<keyword id="KW-0833">Ubl conjugation pathway</keyword>
<organism>
    <name type="scientific">Homo sapiens</name>
    <name type="common">Human</name>
    <dbReference type="NCBI Taxonomy" id="9606"/>
    <lineage>
        <taxon>Eukaryota</taxon>
        <taxon>Metazoa</taxon>
        <taxon>Chordata</taxon>
        <taxon>Craniata</taxon>
        <taxon>Vertebrata</taxon>
        <taxon>Euteleostomi</taxon>
        <taxon>Mammalia</taxon>
        <taxon>Eutheria</taxon>
        <taxon>Euarchontoglires</taxon>
        <taxon>Primates</taxon>
        <taxon>Haplorrhini</taxon>
        <taxon>Catarrhini</taxon>
        <taxon>Hominidae</taxon>
        <taxon>Homo</taxon>
    </lineage>
</organism>
<gene>
    <name type="primary">KLHL11</name>
</gene>
<sequence length="708" mass="80148">MAAAAVAAAAAAAAAASLQVLEMESMETAAAGSAGLAAEVRGSGTVDFGPGPGISAMEASGGDPGPEAEDFECSSHCSELSWRQNEQRRQGLFCDITLCFGGAGGREFRAHRSVLAAATEYFTPLLSGQFSESRSGRVEMRKWSSEPGPEPDTVEAVIEYMYTGRIRVSTGSVHEVLELADRFLLIRLKEFCGEFLKKKLHLSNCVAIHSLAHMYTLSQLALKAADMIRRNFHKVIQDEEFYTLPFHLIRDWLSDLEITVDSEEVLFETVLKWVQRNAEERERYFEELFKLLRLSQMKPTYLTRHVKPERLVANNEVCVKLVADAVERHALRAENIQSGTCQHPTSHVSLLPRYGQNMDVIMVIGGVSEGGDYLSECVGYFVDEDRWVNLPHIHNHLDGHAVAVTESYVYVAGSMEPGFAKTVERYNPNLNTWEHVCSLMTRKHSFGLTEVKGKLYSIGGHGNFSPGFKDVTVYNPELDKWHNLESAPKILRDVKALAIEDRFVYIAARTPVDRDTEDGLKAVITCYDTETRQWQDVESLPLIDNYCFFQMSVVNSNFYQTASCCPKSYCLENEEAVRKIASQVSDEILESLPPEVLSIEGAAICYYKDDVFIIGGWKNSDDIDKQYRKEAYRYCAERKRWMLLPPMPQPRCRATACHVRIPYRYLHGTQRYPMPQNLMWQKDRIRQMQEIHRHALNMRRVPSSQIEC</sequence>
<protein>
    <recommendedName>
        <fullName>Kelch-like protein 11</fullName>
    </recommendedName>
</protein>
<accession>Q9NVR0</accession>
<evidence type="ECO:0000250" key="1"/>
<evidence type="ECO:0000255" key="2"/>
<evidence type="ECO:0000255" key="3">
    <source>
        <dbReference type="PROSITE-ProRule" id="PRU00037"/>
    </source>
</evidence>
<evidence type="ECO:0000256" key="4">
    <source>
        <dbReference type="SAM" id="MobiDB-lite"/>
    </source>
</evidence>
<evidence type="ECO:0000269" key="5">
    <source>
    </source>
</evidence>
<evidence type="ECO:0007744" key="6">
    <source>
    </source>
</evidence>
<evidence type="ECO:0007829" key="7">
    <source>
        <dbReference type="PDB" id="3I3N"/>
    </source>
</evidence>
<evidence type="ECO:0007829" key="8">
    <source>
        <dbReference type="PDB" id="4AP2"/>
    </source>
</evidence>
<dbReference type="EMBL" id="AK001434">
    <property type="protein sequence ID" value="BAA91689.1"/>
    <property type="molecule type" value="mRNA"/>
</dbReference>
<dbReference type="EMBL" id="BC034470">
    <property type="protein sequence ID" value="AAH34470.1"/>
    <property type="molecule type" value="mRNA"/>
</dbReference>
<dbReference type="CCDS" id="CCDS11411.1"/>
<dbReference type="RefSeq" id="NP_060613.1">
    <property type="nucleotide sequence ID" value="NM_018143.3"/>
</dbReference>
<dbReference type="PDB" id="3I3N">
    <property type="method" value="X-ray"/>
    <property type="resolution" value="2.60 A"/>
    <property type="chains" value="A/B=67-340"/>
</dbReference>
<dbReference type="PDB" id="4AP2">
    <property type="method" value="X-ray"/>
    <property type="resolution" value="2.80 A"/>
    <property type="chains" value="A=67-340"/>
</dbReference>
<dbReference type="PDB" id="4APF">
    <property type="method" value="X-ray"/>
    <property type="resolution" value="3.10 A"/>
    <property type="chains" value="A=67-340"/>
</dbReference>
<dbReference type="PDBsum" id="3I3N"/>
<dbReference type="PDBsum" id="4AP2"/>
<dbReference type="PDBsum" id="4APF"/>
<dbReference type="SMR" id="Q9NVR0"/>
<dbReference type="BioGRID" id="120474">
    <property type="interactions" value="76"/>
</dbReference>
<dbReference type="ComplexPortal" id="CPX-8088">
    <property type="entry name" value="CRL3 E3 ubiquitin ligase complex, KLHL11 variant"/>
</dbReference>
<dbReference type="FunCoup" id="Q9NVR0">
    <property type="interactions" value="793"/>
</dbReference>
<dbReference type="IntAct" id="Q9NVR0">
    <property type="interactions" value="65"/>
</dbReference>
<dbReference type="STRING" id="9606.ENSP00000314608"/>
<dbReference type="GlyGen" id="Q9NVR0">
    <property type="glycosylation" value="1 site, 1 O-linked glycan (1 site)"/>
</dbReference>
<dbReference type="iPTMnet" id="Q9NVR0"/>
<dbReference type="PhosphoSitePlus" id="Q9NVR0"/>
<dbReference type="BioMuta" id="KLHL11"/>
<dbReference type="DMDM" id="74734542"/>
<dbReference type="jPOST" id="Q9NVR0"/>
<dbReference type="MassIVE" id="Q9NVR0"/>
<dbReference type="PaxDb" id="9606-ENSP00000314608"/>
<dbReference type="PeptideAtlas" id="Q9NVR0"/>
<dbReference type="ProteomicsDB" id="82847"/>
<dbReference type="Pumba" id="Q9NVR0"/>
<dbReference type="Antibodypedia" id="16791">
    <property type="antibodies" value="108 antibodies from 23 providers"/>
</dbReference>
<dbReference type="DNASU" id="55175"/>
<dbReference type="Ensembl" id="ENST00000319121.4">
    <property type="protein sequence ID" value="ENSP00000314608.3"/>
    <property type="gene ID" value="ENSG00000178502.6"/>
</dbReference>
<dbReference type="GeneID" id="55175"/>
<dbReference type="KEGG" id="hsa:55175"/>
<dbReference type="MANE-Select" id="ENST00000319121.4">
    <property type="protein sequence ID" value="ENSP00000314608.3"/>
    <property type="RefSeq nucleotide sequence ID" value="NM_018143.3"/>
    <property type="RefSeq protein sequence ID" value="NP_060613.1"/>
</dbReference>
<dbReference type="UCSC" id="uc002hyf.2">
    <property type="organism name" value="human"/>
</dbReference>
<dbReference type="AGR" id="HGNC:19008"/>
<dbReference type="CTD" id="55175"/>
<dbReference type="DisGeNET" id="55175"/>
<dbReference type="GeneCards" id="KLHL11"/>
<dbReference type="HGNC" id="HGNC:19008">
    <property type="gene designation" value="KLHL11"/>
</dbReference>
<dbReference type="HPA" id="ENSG00000178502">
    <property type="expression patterns" value="Low tissue specificity"/>
</dbReference>
<dbReference type="MIM" id="619078">
    <property type="type" value="gene"/>
</dbReference>
<dbReference type="neXtProt" id="NX_Q9NVR0"/>
<dbReference type="OpenTargets" id="ENSG00000178502"/>
<dbReference type="PharmGKB" id="PA38777"/>
<dbReference type="VEuPathDB" id="HostDB:ENSG00000178502"/>
<dbReference type="eggNOG" id="KOG1072">
    <property type="taxonomic scope" value="Eukaryota"/>
</dbReference>
<dbReference type="GeneTree" id="ENSGT00940000159275"/>
<dbReference type="HOGENOM" id="CLU_024322_0_0_1"/>
<dbReference type="InParanoid" id="Q9NVR0"/>
<dbReference type="OMA" id="LWSSHMA"/>
<dbReference type="OrthoDB" id="9978265at2759"/>
<dbReference type="PAN-GO" id="Q9NVR0">
    <property type="GO annotations" value="0 GO annotations based on evolutionary models"/>
</dbReference>
<dbReference type="PhylomeDB" id="Q9NVR0"/>
<dbReference type="TreeFam" id="TF331981"/>
<dbReference type="PathwayCommons" id="Q9NVR0"/>
<dbReference type="Reactome" id="R-HSA-8951664">
    <property type="pathway name" value="Neddylation"/>
</dbReference>
<dbReference type="Reactome" id="R-HSA-983168">
    <property type="pathway name" value="Antigen processing: Ubiquitination &amp; Proteasome degradation"/>
</dbReference>
<dbReference type="SignaLink" id="Q9NVR0"/>
<dbReference type="BioGRID-ORCS" id="55175">
    <property type="hits" value="259 hits in 1187 CRISPR screens"/>
</dbReference>
<dbReference type="ChiTaRS" id="KLHL11">
    <property type="organism name" value="human"/>
</dbReference>
<dbReference type="EvolutionaryTrace" id="Q9NVR0"/>
<dbReference type="GenomeRNAi" id="55175"/>
<dbReference type="Pharos" id="Q9NVR0">
    <property type="development level" value="Tbio"/>
</dbReference>
<dbReference type="PRO" id="PR:Q9NVR0"/>
<dbReference type="Proteomes" id="UP000005640">
    <property type="component" value="Chromosome 17"/>
</dbReference>
<dbReference type="RNAct" id="Q9NVR0">
    <property type="molecule type" value="protein"/>
</dbReference>
<dbReference type="Bgee" id="ENSG00000178502">
    <property type="expression patterns" value="Expressed in sperm and 105 other cell types or tissues"/>
</dbReference>
<dbReference type="ExpressionAtlas" id="Q9NVR0">
    <property type="expression patterns" value="baseline and differential"/>
</dbReference>
<dbReference type="GO" id="GO:0031463">
    <property type="term" value="C:Cul3-RING ubiquitin ligase complex"/>
    <property type="evidence" value="ECO:0000318"/>
    <property type="project" value="GO_Central"/>
</dbReference>
<dbReference type="GO" id="GO:0005737">
    <property type="term" value="C:cytoplasm"/>
    <property type="evidence" value="ECO:0000318"/>
    <property type="project" value="GO_Central"/>
</dbReference>
<dbReference type="GO" id="GO:0005829">
    <property type="term" value="C:cytosol"/>
    <property type="evidence" value="ECO:0000304"/>
    <property type="project" value="Reactome"/>
</dbReference>
<dbReference type="GO" id="GO:1990756">
    <property type="term" value="F:ubiquitin-like ligase-substrate adaptor activity"/>
    <property type="evidence" value="ECO:0000318"/>
    <property type="project" value="GO_Central"/>
</dbReference>
<dbReference type="GO" id="GO:0043161">
    <property type="term" value="P:proteasome-mediated ubiquitin-dependent protein catabolic process"/>
    <property type="evidence" value="ECO:0000318"/>
    <property type="project" value="GO_Central"/>
</dbReference>
<dbReference type="CDD" id="cd18451">
    <property type="entry name" value="BACK_KLHL11"/>
    <property type="match status" value="1"/>
</dbReference>
<dbReference type="CDD" id="cd18241">
    <property type="entry name" value="BTB_POZ_KLHL11"/>
    <property type="match status" value="1"/>
</dbReference>
<dbReference type="FunFam" id="1.25.40.420:FF:000019">
    <property type="entry name" value="Kelch-like 11 (Drosophila) (Predicted)"/>
    <property type="match status" value="1"/>
</dbReference>
<dbReference type="FunFam" id="2.120.10.80:FF:000100">
    <property type="entry name" value="Kelch-like 11 (Drosophila), isoform CRA_a"/>
    <property type="match status" value="1"/>
</dbReference>
<dbReference type="FunFam" id="2.120.10.80:FF:000153">
    <property type="entry name" value="Kelch-like 11 (Drosophila), isoform CRA_a"/>
    <property type="match status" value="1"/>
</dbReference>
<dbReference type="Gene3D" id="1.25.40.420">
    <property type="match status" value="1"/>
</dbReference>
<dbReference type="Gene3D" id="2.120.10.80">
    <property type="entry name" value="Kelch-type beta propeller"/>
    <property type="match status" value="2"/>
</dbReference>
<dbReference type="Gene3D" id="3.30.710.10">
    <property type="entry name" value="Potassium Channel Kv1.1, Chain A"/>
    <property type="match status" value="1"/>
</dbReference>
<dbReference type="InterPro" id="IPR011705">
    <property type="entry name" value="BACK"/>
</dbReference>
<dbReference type="InterPro" id="IPR000210">
    <property type="entry name" value="BTB/POZ_dom"/>
</dbReference>
<dbReference type="InterPro" id="IPR015915">
    <property type="entry name" value="Kelch-typ_b-propeller"/>
</dbReference>
<dbReference type="InterPro" id="IPR006652">
    <property type="entry name" value="Kelch_1"/>
</dbReference>
<dbReference type="InterPro" id="IPR011333">
    <property type="entry name" value="SKP1/BTB/POZ_sf"/>
</dbReference>
<dbReference type="PANTHER" id="PTHR45632:SF3">
    <property type="entry name" value="KELCH-LIKE PROTEIN 32"/>
    <property type="match status" value="1"/>
</dbReference>
<dbReference type="PANTHER" id="PTHR45632">
    <property type="entry name" value="LD33804P"/>
    <property type="match status" value="1"/>
</dbReference>
<dbReference type="Pfam" id="PF07707">
    <property type="entry name" value="BACK"/>
    <property type="match status" value="1"/>
</dbReference>
<dbReference type="Pfam" id="PF00651">
    <property type="entry name" value="BTB"/>
    <property type="match status" value="1"/>
</dbReference>
<dbReference type="Pfam" id="PF01344">
    <property type="entry name" value="Kelch_1"/>
    <property type="match status" value="2"/>
</dbReference>
<dbReference type="SMART" id="SM00875">
    <property type="entry name" value="BACK"/>
    <property type="match status" value="1"/>
</dbReference>
<dbReference type="SMART" id="SM00225">
    <property type="entry name" value="BTB"/>
    <property type="match status" value="1"/>
</dbReference>
<dbReference type="SMART" id="SM00612">
    <property type="entry name" value="Kelch"/>
    <property type="match status" value="4"/>
</dbReference>
<dbReference type="SUPFAM" id="SSF117281">
    <property type="entry name" value="Kelch motif"/>
    <property type="match status" value="2"/>
</dbReference>
<dbReference type="SUPFAM" id="SSF54695">
    <property type="entry name" value="POZ domain"/>
    <property type="match status" value="1"/>
</dbReference>
<dbReference type="PROSITE" id="PS50097">
    <property type="entry name" value="BTB"/>
    <property type="match status" value="1"/>
</dbReference>
<feature type="signal peptide" evidence="2">
    <location>
        <begin position="1"/>
        <end position="15"/>
    </location>
</feature>
<feature type="chain" id="PRO_0000243918" description="Kelch-like protein 11">
    <location>
        <begin position="16"/>
        <end position="708"/>
    </location>
</feature>
<feature type="domain" description="BTB" evidence="3">
    <location>
        <begin position="94"/>
        <end position="170"/>
    </location>
</feature>
<feature type="domain" description="BACK">
    <location>
        <begin position="205"/>
        <end position="307"/>
    </location>
</feature>
<feature type="repeat" description="Kelch 1">
    <location>
        <begin position="360"/>
        <end position="407"/>
    </location>
</feature>
<feature type="repeat" description="Kelch 2">
    <location>
        <begin position="408"/>
        <end position="453"/>
    </location>
</feature>
<feature type="repeat" description="Kelch 3">
    <location>
        <begin position="455"/>
        <end position="501"/>
    </location>
</feature>
<feature type="repeat" description="Kelch 4">
    <location>
        <begin position="503"/>
        <end position="556"/>
    </location>
</feature>
<feature type="repeat" description="Kelch 5">
    <location>
        <begin position="610"/>
        <end position="661"/>
    </location>
</feature>
<feature type="region of interest" description="Disordered" evidence="4">
    <location>
        <begin position="47"/>
        <end position="70"/>
    </location>
</feature>
<feature type="modified residue" description="Phosphoserine" evidence="6">
    <location>
        <position position="465"/>
    </location>
</feature>
<feature type="strand" evidence="7">
    <location>
        <begin position="68"/>
        <end position="72"/>
    </location>
</feature>
<feature type="helix" evidence="7">
    <location>
        <begin position="76"/>
        <end position="89"/>
    </location>
</feature>
<feature type="turn" evidence="7">
    <location>
        <begin position="90"/>
        <end position="93"/>
    </location>
</feature>
<feature type="strand" evidence="7">
    <location>
        <begin position="96"/>
        <end position="99"/>
    </location>
</feature>
<feature type="strand" evidence="7">
    <location>
        <begin position="107"/>
        <end position="110"/>
    </location>
</feature>
<feature type="helix" evidence="7">
    <location>
        <begin position="112"/>
        <end position="118"/>
    </location>
</feature>
<feature type="helix" evidence="7">
    <location>
        <begin position="123"/>
        <end position="125"/>
    </location>
</feature>
<feature type="strand" evidence="8">
    <location>
        <begin position="128"/>
        <end position="130"/>
    </location>
</feature>
<feature type="helix" evidence="8">
    <location>
        <begin position="132"/>
        <end position="135"/>
    </location>
</feature>
<feature type="strand" evidence="7">
    <location>
        <begin position="137"/>
        <end position="139"/>
    </location>
</feature>
<feature type="helix" evidence="7">
    <location>
        <begin position="151"/>
        <end position="163"/>
    </location>
</feature>
<feature type="strand" evidence="7">
    <location>
        <begin position="164"/>
        <end position="169"/>
    </location>
</feature>
<feature type="turn" evidence="7">
    <location>
        <begin position="170"/>
        <end position="172"/>
    </location>
</feature>
<feature type="helix" evidence="7">
    <location>
        <begin position="173"/>
        <end position="182"/>
    </location>
</feature>
<feature type="helix" evidence="7">
    <location>
        <begin position="186"/>
        <end position="199"/>
    </location>
</feature>
<feature type="turn" evidence="7">
    <location>
        <begin position="202"/>
        <end position="204"/>
    </location>
</feature>
<feature type="helix" evidence="7">
    <location>
        <begin position="205"/>
        <end position="214"/>
    </location>
</feature>
<feature type="helix" evidence="7">
    <location>
        <begin position="218"/>
        <end position="230"/>
    </location>
</feature>
<feature type="helix" evidence="7">
    <location>
        <begin position="232"/>
        <end position="235"/>
    </location>
</feature>
<feature type="helix" evidence="7">
    <location>
        <begin position="240"/>
        <end position="243"/>
    </location>
</feature>
<feature type="helix" evidence="7">
    <location>
        <begin position="246"/>
        <end position="253"/>
    </location>
</feature>
<feature type="helix" evidence="7">
    <location>
        <begin position="263"/>
        <end position="275"/>
    </location>
</feature>
<feature type="helix" evidence="7">
    <location>
        <begin position="278"/>
        <end position="281"/>
    </location>
</feature>
<feature type="turn" evidence="7">
    <location>
        <begin position="282"/>
        <end position="284"/>
    </location>
</feature>
<feature type="helix" evidence="7">
    <location>
        <begin position="285"/>
        <end position="289"/>
    </location>
</feature>
<feature type="helix" evidence="7">
    <location>
        <begin position="294"/>
        <end position="296"/>
    </location>
</feature>
<feature type="helix" evidence="7">
    <location>
        <begin position="299"/>
        <end position="304"/>
    </location>
</feature>
<feature type="turn" evidence="7">
    <location>
        <begin position="305"/>
        <end position="308"/>
    </location>
</feature>
<feature type="helix" evidence="7">
    <location>
        <begin position="310"/>
        <end position="313"/>
    </location>
</feature>
<feature type="helix" evidence="7">
    <location>
        <begin position="316"/>
        <end position="331"/>
    </location>
</feature>
<proteinExistence type="evidence at protein level"/>
<reference key="1">
    <citation type="journal article" date="2004" name="Nat. Genet.">
        <title>Complete sequencing and characterization of 21,243 full-length human cDNAs.</title>
        <authorList>
            <person name="Ota T."/>
            <person name="Suzuki Y."/>
            <person name="Nishikawa T."/>
            <person name="Otsuki T."/>
            <person name="Sugiyama T."/>
            <person name="Irie R."/>
            <person name="Wakamatsu A."/>
            <person name="Hayashi K."/>
            <person name="Sato H."/>
            <person name="Nagai K."/>
            <person name="Kimura K."/>
            <person name="Makita H."/>
            <person name="Sekine M."/>
            <person name="Obayashi M."/>
            <person name="Nishi T."/>
            <person name="Shibahara T."/>
            <person name="Tanaka T."/>
            <person name="Ishii S."/>
            <person name="Yamamoto J."/>
            <person name="Saito K."/>
            <person name="Kawai Y."/>
            <person name="Isono Y."/>
            <person name="Nakamura Y."/>
            <person name="Nagahari K."/>
            <person name="Murakami K."/>
            <person name="Yasuda T."/>
            <person name="Iwayanagi T."/>
            <person name="Wagatsuma M."/>
            <person name="Shiratori A."/>
            <person name="Sudo H."/>
            <person name="Hosoiri T."/>
            <person name="Kaku Y."/>
            <person name="Kodaira H."/>
            <person name="Kondo H."/>
            <person name="Sugawara M."/>
            <person name="Takahashi M."/>
            <person name="Kanda K."/>
            <person name="Yokoi T."/>
            <person name="Furuya T."/>
            <person name="Kikkawa E."/>
            <person name="Omura Y."/>
            <person name="Abe K."/>
            <person name="Kamihara K."/>
            <person name="Katsuta N."/>
            <person name="Sato K."/>
            <person name="Tanikawa M."/>
            <person name="Yamazaki M."/>
            <person name="Ninomiya K."/>
            <person name="Ishibashi T."/>
            <person name="Yamashita H."/>
            <person name="Murakawa K."/>
            <person name="Fujimori K."/>
            <person name="Tanai H."/>
            <person name="Kimata M."/>
            <person name="Watanabe M."/>
            <person name="Hiraoka S."/>
            <person name="Chiba Y."/>
            <person name="Ishida S."/>
            <person name="Ono Y."/>
            <person name="Takiguchi S."/>
            <person name="Watanabe S."/>
            <person name="Yosida M."/>
            <person name="Hotuta T."/>
            <person name="Kusano J."/>
            <person name="Kanehori K."/>
            <person name="Takahashi-Fujii A."/>
            <person name="Hara H."/>
            <person name="Tanase T.-O."/>
            <person name="Nomura Y."/>
            <person name="Togiya S."/>
            <person name="Komai F."/>
            <person name="Hara R."/>
            <person name="Takeuchi K."/>
            <person name="Arita M."/>
            <person name="Imose N."/>
            <person name="Musashino K."/>
            <person name="Yuuki H."/>
            <person name="Oshima A."/>
            <person name="Sasaki N."/>
            <person name="Aotsuka S."/>
            <person name="Yoshikawa Y."/>
            <person name="Matsunawa H."/>
            <person name="Ichihara T."/>
            <person name="Shiohata N."/>
            <person name="Sano S."/>
            <person name="Moriya S."/>
            <person name="Momiyama H."/>
            <person name="Satoh N."/>
            <person name="Takami S."/>
            <person name="Terashima Y."/>
            <person name="Suzuki O."/>
            <person name="Nakagawa S."/>
            <person name="Senoh A."/>
            <person name="Mizoguchi H."/>
            <person name="Goto Y."/>
            <person name="Shimizu F."/>
            <person name="Wakebe H."/>
            <person name="Hishigaki H."/>
            <person name="Watanabe T."/>
            <person name="Sugiyama A."/>
            <person name="Takemoto M."/>
            <person name="Kawakami B."/>
            <person name="Yamazaki M."/>
            <person name="Watanabe K."/>
            <person name="Kumagai A."/>
            <person name="Itakura S."/>
            <person name="Fukuzumi Y."/>
            <person name="Fujimori Y."/>
            <person name="Komiyama M."/>
            <person name="Tashiro H."/>
            <person name="Tanigami A."/>
            <person name="Fujiwara T."/>
            <person name="Ono T."/>
            <person name="Yamada K."/>
            <person name="Fujii Y."/>
            <person name="Ozaki K."/>
            <person name="Hirao M."/>
            <person name="Ohmori Y."/>
            <person name="Kawabata A."/>
            <person name="Hikiji T."/>
            <person name="Kobatake N."/>
            <person name="Inagaki H."/>
            <person name="Ikema Y."/>
            <person name="Okamoto S."/>
            <person name="Okitani R."/>
            <person name="Kawakami T."/>
            <person name="Noguchi S."/>
            <person name="Itoh T."/>
            <person name="Shigeta K."/>
            <person name="Senba T."/>
            <person name="Matsumura K."/>
            <person name="Nakajima Y."/>
            <person name="Mizuno T."/>
            <person name="Morinaga M."/>
            <person name="Sasaki M."/>
            <person name="Togashi T."/>
            <person name="Oyama M."/>
            <person name="Hata H."/>
            <person name="Watanabe M."/>
            <person name="Komatsu T."/>
            <person name="Mizushima-Sugano J."/>
            <person name="Satoh T."/>
            <person name="Shirai Y."/>
            <person name="Takahashi Y."/>
            <person name="Nakagawa K."/>
            <person name="Okumura K."/>
            <person name="Nagase T."/>
            <person name="Nomura N."/>
            <person name="Kikuchi H."/>
            <person name="Masuho Y."/>
            <person name="Yamashita R."/>
            <person name="Nakai K."/>
            <person name="Yada T."/>
            <person name="Nakamura Y."/>
            <person name="Ohara O."/>
            <person name="Isogai T."/>
            <person name="Sugano S."/>
        </authorList>
    </citation>
    <scope>NUCLEOTIDE SEQUENCE [LARGE SCALE MRNA]</scope>
</reference>
<reference key="2">
    <citation type="journal article" date="2004" name="Genome Res.">
        <title>The status, quality, and expansion of the NIH full-length cDNA project: the Mammalian Gene Collection (MGC).</title>
        <authorList>
            <consortium name="The MGC Project Team"/>
        </authorList>
    </citation>
    <scope>NUCLEOTIDE SEQUENCE [LARGE SCALE MRNA]</scope>
    <source>
        <tissue>Testis</tissue>
    </source>
</reference>
<reference key="3">
    <citation type="journal article" date="2013" name="J. Proteome Res.">
        <title>Toward a comprehensive characterization of a human cancer cell phosphoproteome.</title>
        <authorList>
            <person name="Zhou H."/>
            <person name="Di Palma S."/>
            <person name="Preisinger C."/>
            <person name="Peng M."/>
            <person name="Polat A.N."/>
            <person name="Heck A.J."/>
            <person name="Mohammed S."/>
        </authorList>
    </citation>
    <scope>PHOSPHORYLATION [LARGE SCALE ANALYSIS] AT SER-465</scope>
    <scope>IDENTIFICATION BY MASS SPECTROMETRY [LARGE SCALE ANALYSIS]</scope>
    <source>
        <tissue>Erythroleukemia</tissue>
    </source>
</reference>
<reference key="4">
    <citation type="journal article" date="2013" name="J. Biol. Chem.">
        <title>Structural basis for Cul3 assembly with the BTB-Kelch family of E3 ubiquitin ligases.</title>
        <authorList>
            <person name="Canning P."/>
            <person name="Cooper C.D."/>
            <person name="Krojer T."/>
            <person name="Murray J.W."/>
            <person name="Pike A.C."/>
            <person name="Chaikuad A."/>
            <person name="Keates T."/>
            <person name="Thangaratnarajah C."/>
            <person name="Hojzan V."/>
            <person name="Marsden B.D."/>
            <person name="Gileadi O."/>
            <person name="Knapp S."/>
            <person name="von Delft F."/>
            <person name="Bullock A.N."/>
        </authorList>
    </citation>
    <scope>X-RAY CRYSTALLOGRAPHY (2.6 ANGSTROMS) OF 67-340 IN COMPLEX WITH CUL3</scope>
    <scope>SUBUNIT</scope>
    <scope>INTERACTION WITH CUL3</scope>
</reference>
<name>KLH11_HUMAN</name>
<comment type="function">
    <text evidence="1">Component of a cullin-RING-based BCR (BTB-CUL3-RBX1) E3 ubiquitin-protein ligase complex that mediates the ubiquitination of target proteins, leading most often to their proteasomal degradation.</text>
</comment>
<comment type="subunit">
    <text evidence="1 5">Component of a cullin-RING-based BCR (BTB-CUL3-RBX1) E3 ubiquitin-protein ligase complex (By similarity). Homodimer. Interacts with CUL3.</text>
</comment>
<comment type="interaction">
    <interactant intactId="EBI-2691832">
        <id>Q9NVR0</id>
    </interactant>
    <interactant intactId="EBI-8638439">
        <id>Q8IYA8</id>
        <label>IHO1</label>
    </interactant>
    <organismsDiffer>false</organismsDiffer>
    <experiments>3</experiments>
</comment>
<comment type="interaction">
    <interactant intactId="EBI-2691832">
        <id>Q9NVR0</id>
    </interactant>
    <interactant intactId="EBI-12029004">
        <id>P78424</id>
        <label>POU6F2</label>
    </interactant>
    <organismsDiffer>false</organismsDiffer>
    <experiments>3</experiments>
</comment>
<comment type="interaction">
    <interactant intactId="EBI-2691832">
        <id>Q9NVR0</id>
    </interactant>
    <interactant intactId="EBI-947187">
        <id>Q9UHD9</id>
        <label>UBQLN2</label>
    </interactant>
    <organismsDiffer>false</organismsDiffer>
    <experiments>3</experiments>
</comment>